<accession>O33528</accession>
<feature type="chain" id="PRO_0000078523" description="Chaperone protein DnaK">
    <location>
        <begin position="1"/>
        <end position="638"/>
    </location>
</feature>
<feature type="region of interest" description="Disordered" evidence="2">
    <location>
        <begin position="514"/>
        <end position="542"/>
    </location>
</feature>
<feature type="region of interest" description="Disordered" evidence="2">
    <location>
        <begin position="605"/>
        <end position="638"/>
    </location>
</feature>
<feature type="compositionally biased region" description="Basic and acidic residues" evidence="2">
    <location>
        <begin position="514"/>
        <end position="529"/>
    </location>
</feature>
<feature type="modified residue" description="Phosphothreonine; by autocatalysis" evidence="1">
    <location>
        <position position="198"/>
    </location>
</feature>
<gene>
    <name type="primary">dnaK</name>
</gene>
<organism>
    <name type="scientific">Rhizobium leguminosarum</name>
    <dbReference type="NCBI Taxonomy" id="384"/>
    <lineage>
        <taxon>Bacteria</taxon>
        <taxon>Pseudomonadati</taxon>
        <taxon>Pseudomonadota</taxon>
        <taxon>Alphaproteobacteria</taxon>
        <taxon>Hyphomicrobiales</taxon>
        <taxon>Rhizobiaceae</taxon>
        <taxon>Rhizobium/Agrobacterium group</taxon>
        <taxon>Rhizobium</taxon>
    </lineage>
</organism>
<name>DNAK_RHILE</name>
<dbReference type="EMBL" id="Y14649">
    <property type="protein sequence ID" value="CAA74982.1"/>
    <property type="molecule type" value="Genomic_DNA"/>
</dbReference>
<dbReference type="SMR" id="O33528"/>
<dbReference type="eggNOG" id="COG0443">
    <property type="taxonomic scope" value="Bacteria"/>
</dbReference>
<dbReference type="GO" id="GO:0005524">
    <property type="term" value="F:ATP binding"/>
    <property type="evidence" value="ECO:0007669"/>
    <property type="project" value="UniProtKB-UniRule"/>
</dbReference>
<dbReference type="GO" id="GO:0140662">
    <property type="term" value="F:ATP-dependent protein folding chaperone"/>
    <property type="evidence" value="ECO:0007669"/>
    <property type="project" value="InterPro"/>
</dbReference>
<dbReference type="GO" id="GO:0051082">
    <property type="term" value="F:unfolded protein binding"/>
    <property type="evidence" value="ECO:0007669"/>
    <property type="project" value="InterPro"/>
</dbReference>
<dbReference type="CDD" id="cd11733">
    <property type="entry name" value="ASKHA_NBD_HSP70_HSPA9"/>
    <property type="match status" value="1"/>
</dbReference>
<dbReference type="FunFam" id="2.60.34.10:FF:000014">
    <property type="entry name" value="Chaperone protein DnaK HSP70"/>
    <property type="match status" value="1"/>
</dbReference>
<dbReference type="FunFam" id="3.30.420.40:FF:000020">
    <property type="entry name" value="Chaperone protein HscA homolog"/>
    <property type="match status" value="1"/>
</dbReference>
<dbReference type="FunFam" id="3.30.30.30:FF:000003">
    <property type="entry name" value="Heat shock protein 9"/>
    <property type="match status" value="1"/>
</dbReference>
<dbReference type="FunFam" id="1.20.1270.10:FF:000001">
    <property type="entry name" value="Molecular chaperone DnaK"/>
    <property type="match status" value="1"/>
</dbReference>
<dbReference type="FunFam" id="3.30.420.40:FF:000004">
    <property type="entry name" value="Molecular chaperone DnaK"/>
    <property type="match status" value="1"/>
</dbReference>
<dbReference type="FunFam" id="3.90.640.10:FF:000003">
    <property type="entry name" value="Molecular chaperone DnaK"/>
    <property type="match status" value="1"/>
</dbReference>
<dbReference type="Gene3D" id="1.20.1270.10">
    <property type="match status" value="1"/>
</dbReference>
<dbReference type="Gene3D" id="3.30.420.40">
    <property type="match status" value="2"/>
</dbReference>
<dbReference type="Gene3D" id="3.90.640.10">
    <property type="entry name" value="Actin, Chain A, domain 4"/>
    <property type="match status" value="1"/>
</dbReference>
<dbReference type="Gene3D" id="2.60.34.10">
    <property type="entry name" value="Substrate Binding Domain Of DNAk, Chain A, domain 1"/>
    <property type="match status" value="1"/>
</dbReference>
<dbReference type="HAMAP" id="MF_00332">
    <property type="entry name" value="DnaK"/>
    <property type="match status" value="1"/>
</dbReference>
<dbReference type="InterPro" id="IPR043129">
    <property type="entry name" value="ATPase_NBD"/>
</dbReference>
<dbReference type="InterPro" id="IPR012725">
    <property type="entry name" value="Chaperone_DnaK"/>
</dbReference>
<dbReference type="InterPro" id="IPR018181">
    <property type="entry name" value="Heat_shock_70_CS"/>
</dbReference>
<dbReference type="InterPro" id="IPR029048">
    <property type="entry name" value="HSP70_C_sf"/>
</dbReference>
<dbReference type="InterPro" id="IPR029047">
    <property type="entry name" value="HSP70_peptide-bd_sf"/>
</dbReference>
<dbReference type="InterPro" id="IPR013126">
    <property type="entry name" value="Hsp_70_fam"/>
</dbReference>
<dbReference type="NCBIfam" id="NF001413">
    <property type="entry name" value="PRK00290.1"/>
    <property type="match status" value="1"/>
</dbReference>
<dbReference type="NCBIfam" id="TIGR02350">
    <property type="entry name" value="prok_dnaK"/>
    <property type="match status" value="1"/>
</dbReference>
<dbReference type="PANTHER" id="PTHR19375">
    <property type="entry name" value="HEAT SHOCK PROTEIN 70KDA"/>
    <property type="match status" value="1"/>
</dbReference>
<dbReference type="Pfam" id="PF00012">
    <property type="entry name" value="HSP70"/>
    <property type="match status" value="1"/>
</dbReference>
<dbReference type="PRINTS" id="PR00301">
    <property type="entry name" value="HEATSHOCK70"/>
</dbReference>
<dbReference type="SUPFAM" id="SSF53067">
    <property type="entry name" value="Actin-like ATPase domain"/>
    <property type="match status" value="2"/>
</dbReference>
<dbReference type="SUPFAM" id="SSF100934">
    <property type="entry name" value="Heat shock protein 70kD (HSP70), C-terminal subdomain"/>
    <property type="match status" value="1"/>
</dbReference>
<dbReference type="SUPFAM" id="SSF100920">
    <property type="entry name" value="Heat shock protein 70kD (HSP70), peptide-binding domain"/>
    <property type="match status" value="1"/>
</dbReference>
<dbReference type="PROSITE" id="PS00297">
    <property type="entry name" value="HSP70_1"/>
    <property type="match status" value="1"/>
</dbReference>
<dbReference type="PROSITE" id="PS00329">
    <property type="entry name" value="HSP70_2"/>
    <property type="match status" value="1"/>
</dbReference>
<dbReference type="PROSITE" id="PS01036">
    <property type="entry name" value="HSP70_3"/>
    <property type="match status" value="1"/>
</dbReference>
<keyword id="KW-0067">ATP-binding</keyword>
<keyword id="KW-0143">Chaperone</keyword>
<keyword id="KW-0547">Nucleotide-binding</keyword>
<keyword id="KW-0597">Phosphoprotein</keyword>
<keyword id="KW-0346">Stress response</keyword>
<evidence type="ECO:0000250" key="1"/>
<evidence type="ECO:0000256" key="2">
    <source>
        <dbReference type="SAM" id="MobiDB-lite"/>
    </source>
</evidence>
<evidence type="ECO:0000305" key="3"/>
<sequence length="638" mass="68566">MAKVIGIDLGTTNSCVAVMDGKDAKVIENAEGARTTPSMVAFSDDGERLVGQPAKRQAVTNPTNTLFAVKRLIGRRYEDPTVEKDKHLVPFTIVKGDNGDAWVEANGKGYSPAQISAMILQKMKETAESYLGEKVEKAVITVPAYFNDARPGQPRMPAASLGLEVLRIINEPTAAALAYGLDKKEGKTIAVYDLGGGTFDISILEIGDGVFEVKSTNGDTFLGGEDFDMRLVEYLVAEFKRDNGIDLKNDKLALQRLKEAAEKAKIELSSSQQTEINLPFITADASGPKHLTLKLTRAKLESLVDDLVQRTIAPCKAALKDAGVTAAEIDEVVLVGGMSRMPKVQEVVKQLFGKEPHKGVNPDEVVALGAAIQAGVLQGDVKDVLLLDVTPLSLGIETLGGVFTRLIERNTTIPTKKSQTFSTAEDNQQAVTIRVSQGEREMAADNKLLGQFDLVCLPPSPRGMPQIEVTFDIDANGIVQVSAKDKGTGKEQQIRIQASGGLSDADIEKMVKDAEAHATEDKKRREAVEARNQAESLIHSSEKSLKDYGDKVSEADRTAISDAIAALKTASEASEPDADDIKAKTQTLMEVSMKLGQAIYEAQQAESGAAGMPPPKAGDNVVDADYEEIKDDDRKKSA</sequence>
<protein>
    <recommendedName>
        <fullName>Chaperone protein DnaK</fullName>
    </recommendedName>
    <alternativeName>
        <fullName>HSP70</fullName>
    </alternativeName>
    <alternativeName>
        <fullName>Heat shock 70 kDa protein</fullName>
    </alternativeName>
    <alternativeName>
        <fullName>Heat shock protein 70</fullName>
    </alternativeName>
</protein>
<reference key="1">
    <citation type="submission" date="1997-08" db="EMBL/GenBank/DDBJ databases">
        <authorList>
            <person name="Simpkins S.A."/>
            <person name="Johnston A.W.B."/>
            <person name="James R."/>
        </authorList>
    </citation>
    <scope>NUCLEOTIDE SEQUENCE [GENOMIC DNA]</scope>
    <source>
        <strain>8401:PRL1</strain>
    </source>
</reference>
<proteinExistence type="inferred from homology"/>
<comment type="function">
    <text evidence="1">Acts as a chaperone.</text>
</comment>
<comment type="induction">
    <text evidence="1">By stress conditions e.g. heat shock (By similarity).</text>
</comment>
<comment type="similarity">
    <text evidence="3">Belongs to the heat shock protein 70 family.</text>
</comment>